<proteinExistence type="evidence at transcript level"/>
<reference key="1">
    <citation type="journal article" date="2017" name="Angew. Chem. Int. Ed.">
        <title>Enzymatic synthesis of psilocybin.</title>
        <authorList>
            <person name="Fricke J."/>
            <person name="Blei F."/>
            <person name="Hoffmeister D."/>
        </authorList>
    </citation>
    <scope>NUCLEOTIDE SEQUENCE [MRNA]</scope>
    <scope>IDENTIFICATION</scope>
    <scope>FUNCTION</scope>
    <source>
        <strain>FSU 12416</strain>
    </source>
</reference>
<evidence type="ECO:0000255" key="1"/>
<evidence type="ECO:0000256" key="2">
    <source>
        <dbReference type="SAM" id="MobiDB-lite"/>
    </source>
</evidence>
<evidence type="ECO:0000303" key="3">
    <source>
    </source>
</evidence>
<evidence type="ECO:0000305" key="4"/>
<evidence type="ECO:0000305" key="5">
    <source>
    </source>
</evidence>
<organism>
    <name type="scientific">Psilocybe cyanescens</name>
    <dbReference type="NCBI Taxonomy" id="93625"/>
    <lineage>
        <taxon>Eukaryota</taxon>
        <taxon>Fungi</taxon>
        <taxon>Dikarya</taxon>
        <taxon>Basidiomycota</taxon>
        <taxon>Agaricomycotina</taxon>
        <taxon>Agaricomycetes</taxon>
        <taxon>Agaricomycetidae</taxon>
        <taxon>Agaricales</taxon>
        <taxon>Agaricineae</taxon>
        <taxon>Strophariaceae</taxon>
        <taxon>Psilocybe</taxon>
    </lineage>
</organism>
<feature type="chain" id="PRO_0000445832" description="Major facilitator-type transporter psiT2">
    <location>
        <begin position="1"/>
        <end position="528"/>
    </location>
</feature>
<feature type="transmembrane region" description="Helical" evidence="1">
    <location>
        <begin position="87"/>
        <end position="107"/>
    </location>
</feature>
<feature type="transmembrane region" description="Helical" evidence="1">
    <location>
        <begin position="125"/>
        <end position="145"/>
    </location>
</feature>
<feature type="transmembrane region" description="Helical" evidence="1">
    <location>
        <begin position="148"/>
        <end position="168"/>
    </location>
</feature>
<feature type="transmembrane region" description="Helical" evidence="1">
    <location>
        <begin position="174"/>
        <end position="194"/>
    </location>
</feature>
<feature type="transmembrane region" description="Helical" evidence="1">
    <location>
        <begin position="220"/>
        <end position="240"/>
    </location>
</feature>
<feature type="transmembrane region" description="Helical" evidence="1">
    <location>
        <begin position="322"/>
        <end position="342"/>
    </location>
</feature>
<feature type="transmembrane region" description="Helical" evidence="1">
    <location>
        <begin position="357"/>
        <end position="377"/>
    </location>
</feature>
<feature type="transmembrane region" description="Helical" evidence="1">
    <location>
        <begin position="388"/>
        <end position="408"/>
    </location>
</feature>
<feature type="transmembrane region" description="Helical" evidence="1">
    <location>
        <begin position="424"/>
        <end position="444"/>
    </location>
</feature>
<feature type="transmembrane region" description="Helical" evidence="1">
    <location>
        <begin position="460"/>
        <end position="479"/>
    </location>
</feature>
<feature type="transmembrane region" description="Helical" evidence="1">
    <location>
        <begin position="493"/>
        <end position="513"/>
    </location>
</feature>
<feature type="region of interest" description="Disordered" evidence="2">
    <location>
        <begin position="1"/>
        <end position="20"/>
    </location>
</feature>
<feature type="region of interest" description="Disordered" evidence="2">
    <location>
        <begin position="260"/>
        <end position="299"/>
    </location>
</feature>
<feature type="compositionally biased region" description="Low complexity" evidence="2">
    <location>
        <begin position="260"/>
        <end position="270"/>
    </location>
</feature>
<keyword id="KW-0472">Membrane</keyword>
<keyword id="KW-0812">Transmembrane</keyword>
<keyword id="KW-1133">Transmembrane helix</keyword>
<keyword id="KW-0813">Transport</keyword>
<gene>
    <name evidence="3" type="primary">psiT2</name>
</gene>
<name>PSIT2_PSICY</name>
<comment type="function">
    <text evidence="5">Major facilitator-type transporter; part of the gene cluster that mediates the biosynthesis of psilocybin, a psychotropic tryptamine-derived natural product.</text>
</comment>
<comment type="subcellular location">
    <subcellularLocation>
        <location evidence="1">Membrane</location>
        <topology evidence="1">Multi-pass membrane protein</topology>
    </subcellularLocation>
</comment>
<comment type="similarity">
    <text evidence="4">Belongs to the major facilitator superfamily. TCR/Tet family.</text>
</comment>
<accession>A0A286LF01</accession>
<dbReference type="EMBL" id="MF000996">
    <property type="protein sequence ID" value="ASU62249.1"/>
    <property type="molecule type" value="Genomic_DNA"/>
</dbReference>
<dbReference type="SMR" id="A0A286LF01"/>
<dbReference type="GO" id="GO:0016020">
    <property type="term" value="C:membrane"/>
    <property type="evidence" value="ECO:0007669"/>
    <property type="project" value="UniProtKB-SubCell"/>
</dbReference>
<dbReference type="GO" id="GO:0022857">
    <property type="term" value="F:transmembrane transporter activity"/>
    <property type="evidence" value="ECO:0007669"/>
    <property type="project" value="InterPro"/>
</dbReference>
<dbReference type="Gene3D" id="1.20.1250.20">
    <property type="entry name" value="MFS general substrate transporter like domains"/>
    <property type="match status" value="1"/>
</dbReference>
<dbReference type="InterPro" id="IPR011701">
    <property type="entry name" value="MFS"/>
</dbReference>
<dbReference type="InterPro" id="IPR020846">
    <property type="entry name" value="MFS_dom"/>
</dbReference>
<dbReference type="InterPro" id="IPR036259">
    <property type="entry name" value="MFS_trans_sf"/>
</dbReference>
<dbReference type="InterPro" id="IPR005829">
    <property type="entry name" value="Sugar_transporter_CS"/>
</dbReference>
<dbReference type="PANTHER" id="PTHR23504:SF15">
    <property type="entry name" value="MAJOR FACILITATOR SUPERFAMILY (MFS) PROFILE DOMAIN-CONTAINING PROTEIN"/>
    <property type="match status" value="1"/>
</dbReference>
<dbReference type="PANTHER" id="PTHR23504">
    <property type="entry name" value="MAJOR FACILITATOR SUPERFAMILY DOMAIN-CONTAINING PROTEIN 10"/>
    <property type="match status" value="1"/>
</dbReference>
<dbReference type="Pfam" id="PF07690">
    <property type="entry name" value="MFS_1"/>
    <property type="match status" value="1"/>
</dbReference>
<dbReference type="SUPFAM" id="SSF103473">
    <property type="entry name" value="MFS general substrate transporter"/>
    <property type="match status" value="1"/>
</dbReference>
<dbReference type="PROSITE" id="PS50850">
    <property type="entry name" value="MFS"/>
    <property type="match status" value="1"/>
</dbReference>
<dbReference type="PROSITE" id="PS00216">
    <property type="entry name" value="SUGAR_TRANSPORT_1"/>
    <property type="match status" value="1"/>
</dbReference>
<sequence length="528" mass="57540">MSPERSASLEPDEHSSLLSDTASYISRDDLEDSKAKQIPTPIPKKQLGVLFSIRFTEPIIYSHLWPYINQFVNDIGVADGNPRYVGFYSGLIESVFACGEVCSIFMLSRLSDRIGRRPVLLPSALGVALFTALFGLSTSFTMMLVLRVCAGLLAGATPIVHSVVSELTDETNNALVVPLYGLITPIGFAIGPLIGGTLEHAATKYPNVFGYDFLRKYPYFLPSFVPCCLAVVGVTFGYFFLQETLPSIVRAKKRLERQKSTSSISSRTSTLYGATDDHNRDASESTALSPEEAEDEIDSKPQSIKALIVDPSMRAIMGSGTFLMFLYTSSDVLFSLYCFTAVEDGGVGLPPDEIGYAFSVAGVIAMLMQLCITPWVLRTFDKAKVYKFCMFSFPLVFALMGCLNPLAQTGYNEVSKTIHPTTTGLLYAAIAVLLLLARVCVMAFPISMMLIKQNADKNSLATANGLVQVSMTIARALCPTVSSSLFAYSTSNNILGGHLWVLIMVTISLAGVWQSMSIARVTKRKEEL</sequence>
<protein>
    <recommendedName>
        <fullName evidence="3">Major facilitator-type transporter psiT2</fullName>
    </recommendedName>
    <alternativeName>
        <fullName evidence="3">Psilocybin biosynthesis cluster transporter 2</fullName>
    </alternativeName>
</protein>